<comment type="function">
    <text evidence="1">The UvrABC repair system catalyzes the recognition and processing of DNA lesions. A damage recognition complex composed of 2 UvrA and 2 UvrB subunits scans DNA for abnormalities. Upon binding of the UvrA(2)B(2) complex to a putative damaged site, the DNA wraps around one UvrB monomer. DNA wrap is dependent on ATP binding by UvrB and probably causes local melting of the DNA helix, facilitating insertion of UvrB beta-hairpin between the DNA strands. Then UvrB probes one DNA strand for the presence of a lesion. If a lesion is found the UvrA subunits dissociate and the UvrB-DNA preincision complex is formed. This complex is subsequently bound by UvrC and the second UvrB is released. If no lesion is found, the DNA wraps around the other UvrB subunit that will check the other stand for damage.</text>
</comment>
<comment type="subunit">
    <text evidence="1">Forms a heterotetramer with UvrA during the search for lesions. Interacts with UvrC in an incision complex.</text>
</comment>
<comment type="subcellular location">
    <subcellularLocation>
        <location evidence="1">Cytoplasm</location>
    </subcellularLocation>
</comment>
<comment type="domain">
    <text evidence="1">The beta-hairpin motif is involved in DNA binding.</text>
</comment>
<comment type="similarity">
    <text evidence="1">Belongs to the UvrB family.</text>
</comment>
<accession>Q0TJR9</accession>
<evidence type="ECO:0000255" key="1">
    <source>
        <dbReference type="HAMAP-Rule" id="MF_00204"/>
    </source>
</evidence>
<evidence type="ECO:0000256" key="2">
    <source>
        <dbReference type="SAM" id="MobiDB-lite"/>
    </source>
</evidence>
<sequence length="673" mass="76211">MSKPFKLNSAFKPSGDQPEAIRRLEEGLEDGLAHQTLLGVTGSGKTFTIANVIADLQRPTMVLAPNKTLAAQLYGEMKEFFPENAVEYFVSYYDYYQPEAYVPSSDTFIEKDASVNEHIEQMRLSATKAMLERRDVVVVASVSAIYGLGDPDLYLKMMLHLTVGMIIDQRAILRRLAELQYARNDQAFQRGTFRVRGEVIDIFPAESDDIALRVELFDEEVERLSLFDPLTGQIVSTIPRFTIYPKTHYVTPRERIVQAMEEIKEELAARRKVLLENNKLLEEQRLTQRTQFDLEMMNELGYCSGIENYSRFLSGRGPGEPPPTLFDYLPADGLLVVDESHVTIPQIGGMYRGDRARKETLVEYGFRLPSALDNRPLKFEEFEALAPQTIYVSATPGNYELEKSGGDVVDQVVRPTGLLDPIIEVRPVATQVDDLLSEIRQRAAINERVLVTTLTKRMAEDLTEYLEEHGERVRYLHSDIDTVERMEIIRDLRLGEFDVLVGINLLREGLDMPEVSLVAILDADKEGFLRSERSLIQTIGRAARNVNGKAILYGDKITPSMAKAIGETERRREKQQKYNEEHGITPQGLNKKVVDILALGQNIAKTKAKGRGKSRPIVEPDNVPMDMSPKALQQKIHELEGLMMQHAQNLEFEEAAQIRDQLHLLRELFIAAS</sequence>
<organism>
    <name type="scientific">Escherichia coli O6:K15:H31 (strain 536 / UPEC)</name>
    <dbReference type="NCBI Taxonomy" id="362663"/>
    <lineage>
        <taxon>Bacteria</taxon>
        <taxon>Pseudomonadati</taxon>
        <taxon>Pseudomonadota</taxon>
        <taxon>Gammaproteobacteria</taxon>
        <taxon>Enterobacterales</taxon>
        <taxon>Enterobacteriaceae</taxon>
        <taxon>Escherichia</taxon>
    </lineage>
</organism>
<feature type="chain" id="PRO_1000077889" description="UvrABC system protein B">
    <location>
        <begin position="1"/>
        <end position="673"/>
    </location>
</feature>
<feature type="domain" description="Helicase ATP-binding" evidence="1">
    <location>
        <begin position="26"/>
        <end position="183"/>
    </location>
</feature>
<feature type="domain" description="Helicase C-terminal" evidence="1">
    <location>
        <begin position="431"/>
        <end position="597"/>
    </location>
</feature>
<feature type="domain" description="UVR" evidence="1">
    <location>
        <begin position="633"/>
        <end position="668"/>
    </location>
</feature>
<feature type="region of interest" description="Disordered" evidence="2">
    <location>
        <begin position="608"/>
        <end position="627"/>
    </location>
</feature>
<feature type="short sequence motif" description="Beta-hairpin">
    <location>
        <begin position="92"/>
        <end position="115"/>
    </location>
</feature>
<feature type="binding site" evidence="1">
    <location>
        <begin position="39"/>
        <end position="46"/>
    </location>
    <ligand>
        <name>ATP</name>
        <dbReference type="ChEBI" id="CHEBI:30616"/>
    </ligand>
</feature>
<keyword id="KW-0067">ATP-binding</keyword>
<keyword id="KW-0963">Cytoplasm</keyword>
<keyword id="KW-0227">DNA damage</keyword>
<keyword id="KW-0228">DNA excision</keyword>
<keyword id="KW-0234">DNA repair</keyword>
<keyword id="KW-0267">Excision nuclease</keyword>
<keyword id="KW-0347">Helicase</keyword>
<keyword id="KW-0378">Hydrolase</keyword>
<keyword id="KW-0547">Nucleotide-binding</keyword>
<keyword id="KW-0742">SOS response</keyword>
<reference key="1">
    <citation type="journal article" date="2006" name="Mol. Microbiol.">
        <title>Role of pathogenicity island-associated integrases in the genome plasticity of uropathogenic Escherichia coli strain 536.</title>
        <authorList>
            <person name="Hochhut B."/>
            <person name="Wilde C."/>
            <person name="Balling G."/>
            <person name="Middendorf B."/>
            <person name="Dobrindt U."/>
            <person name="Brzuszkiewicz E."/>
            <person name="Gottschalk G."/>
            <person name="Carniel E."/>
            <person name="Hacker J."/>
        </authorList>
    </citation>
    <scope>NUCLEOTIDE SEQUENCE [LARGE SCALE GENOMIC DNA]</scope>
    <source>
        <strain>536 / UPEC</strain>
    </source>
</reference>
<protein>
    <recommendedName>
        <fullName evidence="1">UvrABC system protein B</fullName>
        <shortName evidence="1">Protein UvrB</shortName>
    </recommendedName>
    <alternativeName>
        <fullName evidence="1">Excinuclease ABC subunit B</fullName>
    </alternativeName>
</protein>
<proteinExistence type="inferred from homology"/>
<dbReference type="EMBL" id="CP000247">
    <property type="protein sequence ID" value="ABG68812.1"/>
    <property type="molecule type" value="Genomic_DNA"/>
</dbReference>
<dbReference type="RefSeq" id="WP_000042530.1">
    <property type="nucleotide sequence ID" value="NC_008253.1"/>
</dbReference>
<dbReference type="SMR" id="Q0TJR9"/>
<dbReference type="KEGG" id="ecp:ECP_0793"/>
<dbReference type="HOGENOM" id="CLU_009621_2_1_6"/>
<dbReference type="Proteomes" id="UP000009182">
    <property type="component" value="Chromosome"/>
</dbReference>
<dbReference type="GO" id="GO:0005737">
    <property type="term" value="C:cytoplasm"/>
    <property type="evidence" value="ECO:0007669"/>
    <property type="project" value="UniProtKB-SubCell"/>
</dbReference>
<dbReference type="GO" id="GO:0009380">
    <property type="term" value="C:excinuclease repair complex"/>
    <property type="evidence" value="ECO:0007669"/>
    <property type="project" value="InterPro"/>
</dbReference>
<dbReference type="GO" id="GO:0005524">
    <property type="term" value="F:ATP binding"/>
    <property type="evidence" value="ECO:0007669"/>
    <property type="project" value="UniProtKB-UniRule"/>
</dbReference>
<dbReference type="GO" id="GO:0016887">
    <property type="term" value="F:ATP hydrolysis activity"/>
    <property type="evidence" value="ECO:0007669"/>
    <property type="project" value="InterPro"/>
</dbReference>
<dbReference type="GO" id="GO:0003677">
    <property type="term" value="F:DNA binding"/>
    <property type="evidence" value="ECO:0007669"/>
    <property type="project" value="UniProtKB-UniRule"/>
</dbReference>
<dbReference type="GO" id="GO:0009381">
    <property type="term" value="F:excinuclease ABC activity"/>
    <property type="evidence" value="ECO:0007669"/>
    <property type="project" value="UniProtKB-UniRule"/>
</dbReference>
<dbReference type="GO" id="GO:0004386">
    <property type="term" value="F:helicase activity"/>
    <property type="evidence" value="ECO:0007669"/>
    <property type="project" value="UniProtKB-KW"/>
</dbReference>
<dbReference type="GO" id="GO:0006289">
    <property type="term" value="P:nucleotide-excision repair"/>
    <property type="evidence" value="ECO:0007669"/>
    <property type="project" value="UniProtKB-UniRule"/>
</dbReference>
<dbReference type="GO" id="GO:0009432">
    <property type="term" value="P:SOS response"/>
    <property type="evidence" value="ECO:0007669"/>
    <property type="project" value="UniProtKB-UniRule"/>
</dbReference>
<dbReference type="CDD" id="cd17916">
    <property type="entry name" value="DEXHc_UvrB"/>
    <property type="match status" value="1"/>
</dbReference>
<dbReference type="CDD" id="cd18790">
    <property type="entry name" value="SF2_C_UvrB"/>
    <property type="match status" value="1"/>
</dbReference>
<dbReference type="FunFam" id="3.40.50.300:FF:000257">
    <property type="entry name" value="UvrABC system protein B"/>
    <property type="match status" value="1"/>
</dbReference>
<dbReference type="FunFam" id="3.40.50.300:FF:000401">
    <property type="entry name" value="UvrABC system protein B"/>
    <property type="match status" value="1"/>
</dbReference>
<dbReference type="FunFam" id="3.40.50.300:FF:000477">
    <property type="entry name" value="UvrABC system protein B"/>
    <property type="match status" value="1"/>
</dbReference>
<dbReference type="Gene3D" id="3.40.50.300">
    <property type="entry name" value="P-loop containing nucleotide triphosphate hydrolases"/>
    <property type="match status" value="3"/>
</dbReference>
<dbReference type="Gene3D" id="4.10.860.10">
    <property type="entry name" value="UVR domain"/>
    <property type="match status" value="1"/>
</dbReference>
<dbReference type="HAMAP" id="MF_00204">
    <property type="entry name" value="UvrB"/>
    <property type="match status" value="1"/>
</dbReference>
<dbReference type="InterPro" id="IPR006935">
    <property type="entry name" value="Helicase/UvrB_N"/>
</dbReference>
<dbReference type="InterPro" id="IPR014001">
    <property type="entry name" value="Helicase_ATP-bd"/>
</dbReference>
<dbReference type="InterPro" id="IPR001650">
    <property type="entry name" value="Helicase_C-like"/>
</dbReference>
<dbReference type="InterPro" id="IPR027417">
    <property type="entry name" value="P-loop_NTPase"/>
</dbReference>
<dbReference type="InterPro" id="IPR001943">
    <property type="entry name" value="UVR_dom"/>
</dbReference>
<dbReference type="InterPro" id="IPR036876">
    <property type="entry name" value="UVR_dom_sf"/>
</dbReference>
<dbReference type="InterPro" id="IPR004807">
    <property type="entry name" value="UvrB"/>
</dbReference>
<dbReference type="InterPro" id="IPR041471">
    <property type="entry name" value="UvrB_inter"/>
</dbReference>
<dbReference type="InterPro" id="IPR024759">
    <property type="entry name" value="UvrB_YAD/RRR_dom"/>
</dbReference>
<dbReference type="NCBIfam" id="NF003673">
    <property type="entry name" value="PRK05298.1"/>
    <property type="match status" value="1"/>
</dbReference>
<dbReference type="NCBIfam" id="TIGR00631">
    <property type="entry name" value="uvrb"/>
    <property type="match status" value="1"/>
</dbReference>
<dbReference type="PANTHER" id="PTHR24029">
    <property type="entry name" value="UVRABC SYSTEM PROTEIN B"/>
    <property type="match status" value="1"/>
</dbReference>
<dbReference type="PANTHER" id="PTHR24029:SF0">
    <property type="entry name" value="UVRABC SYSTEM PROTEIN B"/>
    <property type="match status" value="1"/>
</dbReference>
<dbReference type="Pfam" id="PF00271">
    <property type="entry name" value="Helicase_C"/>
    <property type="match status" value="1"/>
</dbReference>
<dbReference type="Pfam" id="PF04851">
    <property type="entry name" value="ResIII"/>
    <property type="match status" value="1"/>
</dbReference>
<dbReference type="Pfam" id="PF02151">
    <property type="entry name" value="UVR"/>
    <property type="match status" value="1"/>
</dbReference>
<dbReference type="Pfam" id="PF12344">
    <property type="entry name" value="UvrB"/>
    <property type="match status" value="1"/>
</dbReference>
<dbReference type="Pfam" id="PF17757">
    <property type="entry name" value="UvrB_inter"/>
    <property type="match status" value="1"/>
</dbReference>
<dbReference type="SMART" id="SM00487">
    <property type="entry name" value="DEXDc"/>
    <property type="match status" value="1"/>
</dbReference>
<dbReference type="SMART" id="SM00490">
    <property type="entry name" value="HELICc"/>
    <property type="match status" value="1"/>
</dbReference>
<dbReference type="SUPFAM" id="SSF46600">
    <property type="entry name" value="C-terminal UvrC-binding domain of UvrB"/>
    <property type="match status" value="1"/>
</dbReference>
<dbReference type="SUPFAM" id="SSF52540">
    <property type="entry name" value="P-loop containing nucleoside triphosphate hydrolases"/>
    <property type="match status" value="2"/>
</dbReference>
<dbReference type="PROSITE" id="PS51192">
    <property type="entry name" value="HELICASE_ATP_BIND_1"/>
    <property type="match status" value="1"/>
</dbReference>
<dbReference type="PROSITE" id="PS51194">
    <property type="entry name" value="HELICASE_CTER"/>
    <property type="match status" value="1"/>
</dbReference>
<dbReference type="PROSITE" id="PS50151">
    <property type="entry name" value="UVR"/>
    <property type="match status" value="1"/>
</dbReference>
<gene>
    <name evidence="1" type="primary">uvrB</name>
    <name type="ordered locus">ECP_0793</name>
</gene>
<name>UVRB_ECOL5</name>